<sequence length="1028" mass="116678">MSDTPSLTLSALLARRDWENPVVTQWNRLAAHAPLHSWRNEPSARDDAGSARRQTLNGLWRFSYFTAPEQVPQAWVTEDCADAVAMPVPSNWQMQGFDTPIYTNVTYPIPVNPPFVPQENPTGCYSLTFEVDDAWLQSGQTRIIFDGVNSAFHLWCNGQWIGYSQDSRLPAEFDLSAALRPGQNRLAVMVLRWCDGSYLEDQDMWRMSGIFRDVTLLHKPETQIADYHVVTDLNAELDRAVLKVDVTLAGAGFADGEVVFTLWRKGEKCASVSRQPGSAIVDERGSWAERLTVTIPVETPALWSAETPELYRLTMALLNPQGEVLEIEACDVGFRRVEISNGLLKLNGKPLLIRGVNRHEHHSENGQVMDEATMRRDIETMKQHSFNAVRCSHYPNHPLWYQLCDRYGLYVVDEANIETHGMVPMSRLADDPRWLPAMSERVTRMVQRDRNHPSIIIWSLGNESGHGANHDALYRWLKTTDPTRPVQYEGGGANTAATDIVCPMYARVDRDQPFPAVPKWSIKKWIGMPDETRPLILCEYAHAMGNSFGGFAKYWQAFRSHPRLQGGFVWDWVDQALTKRDEDGNTFWAYGGDFGDKPNDRQFCLNGLVFPDRTPHPALYEAHGPQQFFTFTRVSTSPLVIEVQSGYLFRHTDNEVLNWTVARDGDVLVAGEVTLAMVPEGTQRLEIALPELNAGPGEVWLNVEVRQPRATPWSPAAIAAAGSSGRFRLRSLLLRQPRRRAAVLTQTDRILEIAHRQQRWQFDRASGNLTQWWRNGVETLLSPLTDNVSRAPLDNDIGVSEATKIDPNAWVERWKAAGMYDLTPRVLHCEAEQHAGEVVVTTQHVLEYRGKALFLSRKVWRIDEQGVLHGDIQVDMASDIPEPARIGLSVHLAETPENVRWLGLGPHENYPDRKLAAQQGRWTLPLEAMHTPYIFPTENGLRCDTRELVVGMHQLNGHFHFSVSRYSQQQLRETTHHHLLREEPGCWLNLDAFHMGVGGDDSWSPSVSPEFILQTRQLRYTFSWQQNP</sequence>
<accession>Q47077</accession>
<gene>
    <name evidence="1" type="primary">lacZ</name>
</gene>
<keyword id="KW-0326">Glycosidase</keyword>
<keyword id="KW-0378">Hydrolase</keyword>
<keyword id="KW-0460">Magnesium</keyword>
<keyword id="KW-0479">Metal-binding</keyword>
<keyword id="KW-0915">Sodium</keyword>
<feature type="chain" id="PRO_0000057661" description="Beta-galactosidase">
    <location>
        <begin position="1"/>
        <end position="1028"/>
    </location>
</feature>
<feature type="active site" description="Proton donor" evidence="1">
    <location>
        <position position="463"/>
    </location>
</feature>
<feature type="active site" description="Nucleophile" evidence="1">
    <location>
        <position position="539"/>
    </location>
</feature>
<feature type="binding site" evidence="1">
    <location>
        <position position="104"/>
    </location>
    <ligand>
        <name>substrate</name>
    </ligand>
</feature>
<feature type="binding site" evidence="1">
    <location>
        <position position="203"/>
    </location>
    <ligand>
        <name>Na(+)</name>
        <dbReference type="ChEBI" id="CHEBI:29101"/>
    </ligand>
</feature>
<feature type="binding site" evidence="1">
    <location>
        <position position="203"/>
    </location>
    <ligand>
        <name>substrate</name>
    </ligand>
</feature>
<feature type="binding site" evidence="1">
    <location>
        <position position="418"/>
    </location>
    <ligand>
        <name>Mg(2+)</name>
        <dbReference type="ChEBI" id="CHEBI:18420"/>
        <label>1</label>
    </ligand>
</feature>
<feature type="binding site" evidence="1">
    <location>
        <position position="420"/>
    </location>
    <ligand>
        <name>Mg(2+)</name>
        <dbReference type="ChEBI" id="CHEBI:18420"/>
        <label>1</label>
    </ligand>
</feature>
<feature type="binding site" evidence="1">
    <location>
        <position position="463"/>
    </location>
    <ligand>
        <name>Mg(2+)</name>
        <dbReference type="ChEBI" id="CHEBI:18420"/>
        <label>1</label>
    </ligand>
</feature>
<feature type="binding site" evidence="1">
    <location>
        <position position="463"/>
    </location>
    <ligand>
        <name>substrate</name>
    </ligand>
</feature>
<feature type="binding site" evidence="1">
    <location>
        <begin position="539"/>
        <end position="542"/>
    </location>
    <ligand>
        <name>substrate</name>
    </ligand>
</feature>
<feature type="binding site" evidence="1">
    <location>
        <position position="599"/>
    </location>
    <ligand>
        <name>Mg(2+)</name>
        <dbReference type="ChEBI" id="CHEBI:18420"/>
        <label>2</label>
    </ligand>
</feature>
<feature type="binding site" evidence="1">
    <location>
        <position position="603"/>
    </location>
    <ligand>
        <name>Na(+)</name>
        <dbReference type="ChEBI" id="CHEBI:29101"/>
    </ligand>
</feature>
<feature type="binding site" evidence="1">
    <location>
        <position position="606"/>
    </location>
    <ligand>
        <name>Na(+)</name>
        <dbReference type="ChEBI" id="CHEBI:29101"/>
    </ligand>
</feature>
<feature type="binding site" evidence="1">
    <location>
        <position position="606"/>
    </location>
    <ligand>
        <name>substrate</name>
    </ligand>
</feature>
<feature type="binding site" evidence="1">
    <location>
        <position position="1003"/>
    </location>
    <ligand>
        <name>substrate</name>
    </ligand>
</feature>
<feature type="site" description="Transition state stabilizer" evidence="1">
    <location>
        <position position="359"/>
    </location>
</feature>
<feature type="site" description="Transition state stabilizer" evidence="1">
    <location>
        <position position="393"/>
    </location>
</feature>
<dbReference type="EC" id="3.2.1.23" evidence="1"/>
<dbReference type="EMBL" id="D42077">
    <property type="protein sequence ID" value="BAA07673.1"/>
    <property type="molecule type" value="Genomic_DNA"/>
</dbReference>
<dbReference type="SMR" id="Q47077"/>
<dbReference type="CAZy" id="GH2">
    <property type="family name" value="Glycoside Hydrolase Family 2"/>
</dbReference>
<dbReference type="GO" id="GO:0009341">
    <property type="term" value="C:beta-galactosidase complex"/>
    <property type="evidence" value="ECO:0007669"/>
    <property type="project" value="InterPro"/>
</dbReference>
<dbReference type="GO" id="GO:0004565">
    <property type="term" value="F:beta-galactosidase activity"/>
    <property type="evidence" value="ECO:0007669"/>
    <property type="project" value="UniProtKB-EC"/>
</dbReference>
<dbReference type="GO" id="GO:0030246">
    <property type="term" value="F:carbohydrate binding"/>
    <property type="evidence" value="ECO:0007669"/>
    <property type="project" value="InterPro"/>
</dbReference>
<dbReference type="GO" id="GO:0000287">
    <property type="term" value="F:magnesium ion binding"/>
    <property type="evidence" value="ECO:0007669"/>
    <property type="project" value="UniProtKB-UniRule"/>
</dbReference>
<dbReference type="GO" id="GO:0005990">
    <property type="term" value="P:lactose catabolic process"/>
    <property type="evidence" value="ECO:0007669"/>
    <property type="project" value="TreeGrafter"/>
</dbReference>
<dbReference type="FunFam" id="2.60.40.10:FF:000680">
    <property type="entry name" value="Beta-galactosidase"/>
    <property type="match status" value="1"/>
</dbReference>
<dbReference type="FunFam" id="3.20.20.80:FF:000018">
    <property type="entry name" value="Beta-galactosidase"/>
    <property type="match status" value="1"/>
</dbReference>
<dbReference type="Gene3D" id="2.70.98.10">
    <property type="match status" value="1"/>
</dbReference>
<dbReference type="Gene3D" id="2.60.120.260">
    <property type="entry name" value="Galactose-binding domain-like"/>
    <property type="match status" value="1"/>
</dbReference>
<dbReference type="Gene3D" id="3.20.20.80">
    <property type="entry name" value="Glycosidases"/>
    <property type="match status" value="1"/>
</dbReference>
<dbReference type="Gene3D" id="2.60.40.10">
    <property type="entry name" value="Immunoglobulins"/>
    <property type="match status" value="2"/>
</dbReference>
<dbReference type="HAMAP" id="MF_01687">
    <property type="entry name" value="Beta_gal"/>
    <property type="match status" value="1"/>
</dbReference>
<dbReference type="InterPro" id="IPR004199">
    <property type="entry name" value="B-gal_small/dom_5"/>
</dbReference>
<dbReference type="InterPro" id="IPR050347">
    <property type="entry name" value="Bact_Beta-galactosidase"/>
</dbReference>
<dbReference type="InterPro" id="IPR036156">
    <property type="entry name" value="Beta-gal/glucu_dom_sf"/>
</dbReference>
<dbReference type="InterPro" id="IPR011013">
    <property type="entry name" value="Gal_mutarotase_sf_dom"/>
</dbReference>
<dbReference type="InterPro" id="IPR008979">
    <property type="entry name" value="Galactose-bd-like_sf"/>
</dbReference>
<dbReference type="InterPro" id="IPR014718">
    <property type="entry name" value="GH-type_carb-bd"/>
</dbReference>
<dbReference type="InterPro" id="IPR006101">
    <property type="entry name" value="Glyco_hydro_2"/>
</dbReference>
<dbReference type="InterPro" id="IPR023232">
    <property type="entry name" value="Glyco_hydro_2_AS"/>
</dbReference>
<dbReference type="InterPro" id="IPR023933">
    <property type="entry name" value="Glyco_hydro_2_beta_Galsidase"/>
</dbReference>
<dbReference type="InterPro" id="IPR006103">
    <property type="entry name" value="Glyco_hydro_2_cat"/>
</dbReference>
<dbReference type="InterPro" id="IPR023230">
    <property type="entry name" value="Glyco_hydro_2_CS"/>
</dbReference>
<dbReference type="InterPro" id="IPR006102">
    <property type="entry name" value="Glyco_hydro_2_Ig-like"/>
</dbReference>
<dbReference type="InterPro" id="IPR006104">
    <property type="entry name" value="Glyco_hydro_2_N"/>
</dbReference>
<dbReference type="InterPro" id="IPR017853">
    <property type="entry name" value="Glycoside_hydrolase_SF"/>
</dbReference>
<dbReference type="InterPro" id="IPR013783">
    <property type="entry name" value="Ig-like_fold"/>
</dbReference>
<dbReference type="InterPro" id="IPR032312">
    <property type="entry name" value="LacZ_4"/>
</dbReference>
<dbReference type="NCBIfam" id="NF007074">
    <property type="entry name" value="PRK09525.1"/>
    <property type="match status" value="1"/>
</dbReference>
<dbReference type="PANTHER" id="PTHR46323">
    <property type="entry name" value="BETA-GALACTOSIDASE"/>
    <property type="match status" value="1"/>
</dbReference>
<dbReference type="PANTHER" id="PTHR46323:SF2">
    <property type="entry name" value="BETA-GALACTOSIDASE"/>
    <property type="match status" value="1"/>
</dbReference>
<dbReference type="Pfam" id="PF02929">
    <property type="entry name" value="Bgal_small_N"/>
    <property type="match status" value="1"/>
</dbReference>
<dbReference type="Pfam" id="PF00703">
    <property type="entry name" value="Glyco_hydro_2"/>
    <property type="match status" value="1"/>
</dbReference>
<dbReference type="Pfam" id="PF02836">
    <property type="entry name" value="Glyco_hydro_2_C"/>
    <property type="match status" value="1"/>
</dbReference>
<dbReference type="Pfam" id="PF02837">
    <property type="entry name" value="Glyco_hydro_2_N"/>
    <property type="match status" value="1"/>
</dbReference>
<dbReference type="Pfam" id="PF16353">
    <property type="entry name" value="LacZ_4"/>
    <property type="match status" value="1"/>
</dbReference>
<dbReference type="PRINTS" id="PR00132">
    <property type="entry name" value="GLHYDRLASE2"/>
</dbReference>
<dbReference type="SMART" id="SM01038">
    <property type="entry name" value="Bgal_small_N"/>
    <property type="match status" value="1"/>
</dbReference>
<dbReference type="SUPFAM" id="SSF51445">
    <property type="entry name" value="(Trans)glycosidases"/>
    <property type="match status" value="1"/>
</dbReference>
<dbReference type="SUPFAM" id="SSF49303">
    <property type="entry name" value="beta-Galactosidase/glucuronidase domain"/>
    <property type="match status" value="2"/>
</dbReference>
<dbReference type="SUPFAM" id="SSF74650">
    <property type="entry name" value="Galactose mutarotase-like"/>
    <property type="match status" value="1"/>
</dbReference>
<dbReference type="SUPFAM" id="SSF49785">
    <property type="entry name" value="Galactose-binding domain-like"/>
    <property type="match status" value="1"/>
</dbReference>
<dbReference type="PROSITE" id="PS00719">
    <property type="entry name" value="GLYCOSYL_HYDROL_F2_1"/>
    <property type="match status" value="1"/>
</dbReference>
<dbReference type="PROSITE" id="PS00608">
    <property type="entry name" value="GLYCOSYL_HYDROL_F2_2"/>
    <property type="match status" value="1"/>
</dbReference>
<protein>
    <recommendedName>
        <fullName evidence="1">Beta-galactosidase</fullName>
        <shortName evidence="1">Beta-gal</shortName>
        <ecNumber evidence="1">3.2.1.23</ecNumber>
    </recommendedName>
    <alternativeName>
        <fullName evidence="1">Lactase</fullName>
    </alternativeName>
</protein>
<name>BGAL1_ENTCL</name>
<evidence type="ECO:0000255" key="1">
    <source>
        <dbReference type="HAMAP-Rule" id="MF_01687"/>
    </source>
</evidence>
<comment type="catalytic activity">
    <reaction evidence="1">
        <text>Hydrolysis of terminal non-reducing beta-D-galactose residues in beta-D-galactosides.</text>
        <dbReference type="EC" id="3.2.1.23"/>
    </reaction>
</comment>
<comment type="cofactor">
    <cofactor evidence="1">
        <name>Mg(2+)</name>
        <dbReference type="ChEBI" id="CHEBI:18420"/>
    </cofactor>
    <text evidence="1">Binds 2 magnesium ions per monomer.</text>
</comment>
<comment type="cofactor">
    <cofactor evidence="1">
        <name>Na(+)</name>
        <dbReference type="ChEBI" id="CHEBI:29101"/>
    </cofactor>
    <text evidence="1">Binds 1 sodium ion per monomer.</text>
</comment>
<comment type="subunit">
    <text evidence="1">Homotetramer.</text>
</comment>
<comment type="similarity">
    <text evidence="1">Belongs to the glycosyl hydrolase 2 family.</text>
</comment>
<proteinExistence type="inferred from homology"/>
<organism>
    <name type="scientific">Enterobacter cloacae</name>
    <dbReference type="NCBI Taxonomy" id="550"/>
    <lineage>
        <taxon>Bacteria</taxon>
        <taxon>Pseudomonadati</taxon>
        <taxon>Pseudomonadota</taxon>
        <taxon>Gammaproteobacteria</taxon>
        <taxon>Enterobacterales</taxon>
        <taxon>Enterobacteriaceae</taxon>
        <taxon>Enterobacter</taxon>
        <taxon>Enterobacter cloacae complex</taxon>
    </lineage>
</organism>
<reference key="1">
    <citation type="journal article" date="1994" name="Biosci. Biotechnol. Biochem.">
        <title>Molecular cloning and nucleotide sequence of the beta-galactosidase gene from Enterobacter cloacae GAO.</title>
        <authorList>
            <person name="Nagano H."/>
            <person name="Kawaguchi T."/>
            <person name="Omori M."/>
            <person name="Shoji Z."/>
            <person name="Arai M."/>
        </authorList>
    </citation>
    <scope>NUCLEOTIDE SEQUENCE [GENOMIC DNA]</scope>
    <source>
        <strain>GAO</strain>
    </source>
</reference>